<sequence length="367" mass="42449">MISFETKTKIEELEKKYKDVLSVVNEDEINKELEEVEKKLTDPSVWDDQKKAREYTQKLKRLKNISEDLKRVRSLFEDLEVAIELSDEDQEMAQHVEEIVQELEGAVKKLELEIILNGKYDPNNAYLSVHPGAGGTESQDWAQMLLRMYMRWAERKGFDVEIVEFQPGEEAGIKDATILIKGEYAYGYLKHESGVHRLVRISPFDAARRRHTSFASVNVIPEIDDDVDIEIRPEDLKIETFRASGHGGQYVNKTESAVRITHLPTGIVVSCQNERSQHQNKQTALKILKAKLYQLEMEKKRREIQEIQGELKDISWGNQIRSYIFHPYTMVKDHRTGVETANVDAVMDGDIDMFIEAELVYFARRSS</sequence>
<accession>B1LB88</accession>
<protein>
    <recommendedName>
        <fullName evidence="1">Peptide chain release factor 2</fullName>
        <shortName evidence="1">RF-2</shortName>
    </recommendedName>
</protein>
<evidence type="ECO:0000255" key="1">
    <source>
        <dbReference type="HAMAP-Rule" id="MF_00094"/>
    </source>
</evidence>
<keyword id="KW-0963">Cytoplasm</keyword>
<keyword id="KW-0488">Methylation</keyword>
<keyword id="KW-0648">Protein biosynthesis</keyword>
<name>RF2_THESQ</name>
<reference key="1">
    <citation type="journal article" date="2011" name="J. Bacteriol.">
        <title>Genome sequence of Thermotoga sp. strain RQ2, a hyperthermophilic bacterium isolated from a geothermally heated region of the seafloor near Ribeira Quente, the Azores.</title>
        <authorList>
            <person name="Swithers K.S."/>
            <person name="DiPippo J.L."/>
            <person name="Bruce D.C."/>
            <person name="Detter C."/>
            <person name="Tapia R."/>
            <person name="Han S."/>
            <person name="Saunders E."/>
            <person name="Goodwin L.A."/>
            <person name="Han J."/>
            <person name="Woyke T."/>
            <person name="Pitluck S."/>
            <person name="Pennacchio L."/>
            <person name="Nolan M."/>
            <person name="Mikhailova N."/>
            <person name="Lykidis A."/>
            <person name="Land M.L."/>
            <person name="Brettin T."/>
            <person name="Stetter K.O."/>
            <person name="Nelson K.E."/>
            <person name="Gogarten J.P."/>
            <person name="Noll K.M."/>
        </authorList>
    </citation>
    <scope>NUCLEOTIDE SEQUENCE [LARGE SCALE GENOMIC DNA]</scope>
    <source>
        <strain>RQ2</strain>
    </source>
</reference>
<organism>
    <name type="scientific">Thermotoga sp. (strain RQ2)</name>
    <dbReference type="NCBI Taxonomy" id="126740"/>
    <lineage>
        <taxon>Bacteria</taxon>
        <taxon>Thermotogati</taxon>
        <taxon>Thermotogota</taxon>
        <taxon>Thermotogae</taxon>
        <taxon>Thermotogales</taxon>
        <taxon>Thermotogaceae</taxon>
        <taxon>Thermotoga</taxon>
    </lineage>
</organism>
<proteinExistence type="inferred from homology"/>
<comment type="function">
    <text evidence="1">Peptide chain release factor 2 directs the termination of translation in response to the peptide chain termination codons UGA and UAA.</text>
</comment>
<comment type="subcellular location">
    <subcellularLocation>
        <location evidence="1">Cytoplasm</location>
    </subcellularLocation>
</comment>
<comment type="PTM">
    <text evidence="1">Methylated by PrmC. Methylation increases the termination efficiency of RF2.</text>
</comment>
<comment type="similarity">
    <text evidence="1">Belongs to the prokaryotic/mitochondrial release factor family.</text>
</comment>
<dbReference type="EMBL" id="CP000969">
    <property type="protein sequence ID" value="ACB09586.1"/>
    <property type="molecule type" value="Genomic_DNA"/>
</dbReference>
<dbReference type="RefSeq" id="WP_004082004.1">
    <property type="nucleotide sequence ID" value="NC_010483.1"/>
</dbReference>
<dbReference type="SMR" id="B1LB88"/>
<dbReference type="KEGG" id="trq:TRQ2_1242"/>
<dbReference type="HOGENOM" id="CLU_036856_6_0_0"/>
<dbReference type="Proteomes" id="UP000001687">
    <property type="component" value="Chromosome"/>
</dbReference>
<dbReference type="GO" id="GO:0005737">
    <property type="term" value="C:cytoplasm"/>
    <property type="evidence" value="ECO:0007669"/>
    <property type="project" value="UniProtKB-SubCell"/>
</dbReference>
<dbReference type="GO" id="GO:0016149">
    <property type="term" value="F:translation release factor activity, codon specific"/>
    <property type="evidence" value="ECO:0007669"/>
    <property type="project" value="UniProtKB-UniRule"/>
</dbReference>
<dbReference type="FunFam" id="3.30.160.20:FF:000010">
    <property type="entry name" value="Peptide chain release factor 2"/>
    <property type="match status" value="1"/>
</dbReference>
<dbReference type="Gene3D" id="3.30.160.20">
    <property type="match status" value="1"/>
</dbReference>
<dbReference type="Gene3D" id="3.30.70.1660">
    <property type="match status" value="1"/>
</dbReference>
<dbReference type="Gene3D" id="1.20.58.410">
    <property type="entry name" value="Release factor"/>
    <property type="match status" value="1"/>
</dbReference>
<dbReference type="HAMAP" id="MF_00094">
    <property type="entry name" value="Rel_fac_2"/>
    <property type="match status" value="1"/>
</dbReference>
<dbReference type="InterPro" id="IPR005139">
    <property type="entry name" value="PCRF"/>
</dbReference>
<dbReference type="InterPro" id="IPR000352">
    <property type="entry name" value="Pep_chain_release_fac_I"/>
</dbReference>
<dbReference type="InterPro" id="IPR045853">
    <property type="entry name" value="Pep_chain_release_fac_I_sf"/>
</dbReference>
<dbReference type="InterPro" id="IPR004374">
    <property type="entry name" value="PrfB"/>
</dbReference>
<dbReference type="NCBIfam" id="TIGR00020">
    <property type="entry name" value="prfB"/>
    <property type="match status" value="1"/>
</dbReference>
<dbReference type="PANTHER" id="PTHR43116:SF3">
    <property type="entry name" value="CLASS I PEPTIDE CHAIN RELEASE FACTOR"/>
    <property type="match status" value="1"/>
</dbReference>
<dbReference type="PANTHER" id="PTHR43116">
    <property type="entry name" value="PEPTIDE CHAIN RELEASE FACTOR 2"/>
    <property type="match status" value="1"/>
</dbReference>
<dbReference type="Pfam" id="PF03462">
    <property type="entry name" value="PCRF"/>
    <property type="match status" value="1"/>
</dbReference>
<dbReference type="Pfam" id="PF00472">
    <property type="entry name" value="RF-1"/>
    <property type="match status" value="1"/>
</dbReference>
<dbReference type="SMART" id="SM00937">
    <property type="entry name" value="PCRF"/>
    <property type="match status" value="1"/>
</dbReference>
<dbReference type="SUPFAM" id="SSF75620">
    <property type="entry name" value="Release factor"/>
    <property type="match status" value="1"/>
</dbReference>
<dbReference type="PROSITE" id="PS00745">
    <property type="entry name" value="RF_PROK_I"/>
    <property type="match status" value="1"/>
</dbReference>
<feature type="chain" id="PRO_1000093560" description="Peptide chain release factor 2">
    <location>
        <begin position="1"/>
        <end position="367"/>
    </location>
</feature>
<feature type="modified residue" description="N5-methylglutamine" evidence="1">
    <location>
        <position position="249"/>
    </location>
</feature>
<gene>
    <name evidence="1" type="primary">prfB</name>
    <name type="ordered locus">TRQ2_1242</name>
</gene>